<keyword id="KW-0028">Amino-acid biosynthesis</keyword>
<keyword id="KW-0368">Histidine biosynthesis</keyword>
<keyword id="KW-0378">Hydrolase</keyword>
<keyword id="KW-0486">Methionine biosynthesis</keyword>
<keyword id="KW-0511">Multifunctional enzyme</keyword>
<keyword id="KW-0521">NADP</keyword>
<keyword id="KW-0554">One-carbon metabolism</keyword>
<keyword id="KW-0560">Oxidoreductase</keyword>
<keyword id="KW-0658">Purine biosynthesis</keyword>
<accession>A9MW26</accession>
<reference key="1">
    <citation type="submission" date="2007-11" db="EMBL/GenBank/DDBJ databases">
        <authorList>
            <consortium name="The Salmonella enterica serovar Paratyphi B Genome Sequencing Project"/>
            <person name="McClelland M."/>
            <person name="Sanderson E.K."/>
            <person name="Porwollik S."/>
            <person name="Spieth J."/>
            <person name="Clifton W.S."/>
            <person name="Fulton R."/>
            <person name="Cordes M."/>
            <person name="Wollam A."/>
            <person name="Shah N."/>
            <person name="Pepin K."/>
            <person name="Bhonagiri V."/>
            <person name="Nash W."/>
            <person name="Johnson M."/>
            <person name="Thiruvilangam P."/>
            <person name="Wilson R."/>
        </authorList>
    </citation>
    <scope>NUCLEOTIDE SEQUENCE [LARGE SCALE GENOMIC DNA]</scope>
    <source>
        <strain>ATCC BAA-1250 / SPB7</strain>
    </source>
</reference>
<protein>
    <recommendedName>
        <fullName evidence="1">Bifunctional protein FolD</fullName>
    </recommendedName>
    <domain>
        <recommendedName>
            <fullName evidence="1">Methylenetetrahydrofolate dehydrogenase</fullName>
            <ecNumber evidence="1">1.5.1.5</ecNumber>
        </recommendedName>
    </domain>
    <domain>
        <recommendedName>
            <fullName evidence="1">Methenyltetrahydrofolate cyclohydrolase</fullName>
            <ecNumber evidence="1">3.5.4.9</ecNumber>
        </recommendedName>
    </domain>
</protein>
<feature type="chain" id="PRO_1000087916" description="Bifunctional protein FolD">
    <location>
        <begin position="1"/>
        <end position="288"/>
    </location>
</feature>
<feature type="binding site" evidence="1">
    <location>
        <begin position="166"/>
        <end position="168"/>
    </location>
    <ligand>
        <name>NADP(+)</name>
        <dbReference type="ChEBI" id="CHEBI:58349"/>
    </ligand>
</feature>
<feature type="binding site" evidence="1">
    <location>
        <position position="232"/>
    </location>
    <ligand>
        <name>NADP(+)</name>
        <dbReference type="ChEBI" id="CHEBI:58349"/>
    </ligand>
</feature>
<proteinExistence type="inferred from homology"/>
<dbReference type="EC" id="1.5.1.5" evidence="1"/>
<dbReference type="EC" id="3.5.4.9" evidence="1"/>
<dbReference type="EMBL" id="CP000886">
    <property type="protein sequence ID" value="ABX68385.1"/>
    <property type="molecule type" value="Genomic_DNA"/>
</dbReference>
<dbReference type="RefSeq" id="WP_000729165.1">
    <property type="nucleotide sequence ID" value="NC_010102.1"/>
</dbReference>
<dbReference type="SMR" id="A9MW26"/>
<dbReference type="KEGG" id="spq:SPAB_03022"/>
<dbReference type="PATRIC" id="fig|1016998.12.peg.2850"/>
<dbReference type="HOGENOM" id="CLU_034045_2_1_6"/>
<dbReference type="BioCyc" id="SENT1016998:SPAB_RS12315-MONOMER"/>
<dbReference type="UniPathway" id="UPA00193"/>
<dbReference type="Proteomes" id="UP000008556">
    <property type="component" value="Chromosome"/>
</dbReference>
<dbReference type="GO" id="GO:0005829">
    <property type="term" value="C:cytosol"/>
    <property type="evidence" value="ECO:0007669"/>
    <property type="project" value="TreeGrafter"/>
</dbReference>
<dbReference type="GO" id="GO:0004477">
    <property type="term" value="F:methenyltetrahydrofolate cyclohydrolase activity"/>
    <property type="evidence" value="ECO:0007669"/>
    <property type="project" value="UniProtKB-UniRule"/>
</dbReference>
<dbReference type="GO" id="GO:0004488">
    <property type="term" value="F:methylenetetrahydrofolate dehydrogenase (NADP+) activity"/>
    <property type="evidence" value="ECO:0007669"/>
    <property type="project" value="UniProtKB-UniRule"/>
</dbReference>
<dbReference type="GO" id="GO:0000105">
    <property type="term" value="P:L-histidine biosynthetic process"/>
    <property type="evidence" value="ECO:0007669"/>
    <property type="project" value="UniProtKB-KW"/>
</dbReference>
<dbReference type="GO" id="GO:0009086">
    <property type="term" value="P:methionine biosynthetic process"/>
    <property type="evidence" value="ECO:0007669"/>
    <property type="project" value="UniProtKB-KW"/>
</dbReference>
<dbReference type="GO" id="GO:0006164">
    <property type="term" value="P:purine nucleotide biosynthetic process"/>
    <property type="evidence" value="ECO:0007669"/>
    <property type="project" value="UniProtKB-KW"/>
</dbReference>
<dbReference type="GO" id="GO:0035999">
    <property type="term" value="P:tetrahydrofolate interconversion"/>
    <property type="evidence" value="ECO:0007669"/>
    <property type="project" value="UniProtKB-UniRule"/>
</dbReference>
<dbReference type="CDD" id="cd01080">
    <property type="entry name" value="NAD_bind_m-THF_DH_Cyclohyd"/>
    <property type="match status" value="1"/>
</dbReference>
<dbReference type="FunFam" id="3.40.50.10860:FF:000001">
    <property type="entry name" value="Bifunctional protein FolD"/>
    <property type="match status" value="1"/>
</dbReference>
<dbReference type="FunFam" id="3.40.50.720:FF:000006">
    <property type="entry name" value="Bifunctional protein FolD"/>
    <property type="match status" value="1"/>
</dbReference>
<dbReference type="Gene3D" id="3.40.50.10860">
    <property type="entry name" value="Leucine Dehydrogenase, chain A, domain 1"/>
    <property type="match status" value="1"/>
</dbReference>
<dbReference type="Gene3D" id="3.40.50.720">
    <property type="entry name" value="NAD(P)-binding Rossmann-like Domain"/>
    <property type="match status" value="1"/>
</dbReference>
<dbReference type="HAMAP" id="MF_01576">
    <property type="entry name" value="THF_DHG_CYH"/>
    <property type="match status" value="1"/>
</dbReference>
<dbReference type="InterPro" id="IPR046346">
    <property type="entry name" value="Aminoacid_DH-like_N_sf"/>
</dbReference>
<dbReference type="InterPro" id="IPR036291">
    <property type="entry name" value="NAD(P)-bd_dom_sf"/>
</dbReference>
<dbReference type="InterPro" id="IPR000672">
    <property type="entry name" value="THF_DH/CycHdrlase"/>
</dbReference>
<dbReference type="InterPro" id="IPR020630">
    <property type="entry name" value="THF_DH/CycHdrlase_cat_dom"/>
</dbReference>
<dbReference type="InterPro" id="IPR020867">
    <property type="entry name" value="THF_DH/CycHdrlase_CS"/>
</dbReference>
<dbReference type="InterPro" id="IPR020631">
    <property type="entry name" value="THF_DH/CycHdrlase_NAD-bd_dom"/>
</dbReference>
<dbReference type="NCBIfam" id="NF008058">
    <property type="entry name" value="PRK10792.1"/>
    <property type="match status" value="1"/>
</dbReference>
<dbReference type="NCBIfam" id="NF010783">
    <property type="entry name" value="PRK14186.1"/>
    <property type="match status" value="1"/>
</dbReference>
<dbReference type="PANTHER" id="PTHR48099:SF5">
    <property type="entry name" value="C-1-TETRAHYDROFOLATE SYNTHASE, CYTOPLASMIC"/>
    <property type="match status" value="1"/>
</dbReference>
<dbReference type="PANTHER" id="PTHR48099">
    <property type="entry name" value="C-1-TETRAHYDROFOLATE SYNTHASE, CYTOPLASMIC-RELATED"/>
    <property type="match status" value="1"/>
</dbReference>
<dbReference type="Pfam" id="PF00763">
    <property type="entry name" value="THF_DHG_CYH"/>
    <property type="match status" value="1"/>
</dbReference>
<dbReference type="Pfam" id="PF02882">
    <property type="entry name" value="THF_DHG_CYH_C"/>
    <property type="match status" value="1"/>
</dbReference>
<dbReference type="PRINTS" id="PR00085">
    <property type="entry name" value="THFDHDRGNASE"/>
</dbReference>
<dbReference type="SUPFAM" id="SSF53223">
    <property type="entry name" value="Aminoacid dehydrogenase-like, N-terminal domain"/>
    <property type="match status" value="1"/>
</dbReference>
<dbReference type="SUPFAM" id="SSF51735">
    <property type="entry name" value="NAD(P)-binding Rossmann-fold domains"/>
    <property type="match status" value="1"/>
</dbReference>
<dbReference type="PROSITE" id="PS00766">
    <property type="entry name" value="THF_DHG_CYH_1"/>
    <property type="match status" value="1"/>
</dbReference>
<dbReference type="PROSITE" id="PS00767">
    <property type="entry name" value="THF_DHG_CYH_2"/>
    <property type="match status" value="1"/>
</dbReference>
<organism>
    <name type="scientific">Salmonella paratyphi B (strain ATCC BAA-1250 / SPB7)</name>
    <dbReference type="NCBI Taxonomy" id="1016998"/>
    <lineage>
        <taxon>Bacteria</taxon>
        <taxon>Pseudomonadati</taxon>
        <taxon>Pseudomonadota</taxon>
        <taxon>Gammaproteobacteria</taxon>
        <taxon>Enterobacterales</taxon>
        <taxon>Enterobacteriaceae</taxon>
        <taxon>Salmonella</taxon>
    </lineage>
</organism>
<evidence type="ECO:0000255" key="1">
    <source>
        <dbReference type="HAMAP-Rule" id="MF_01576"/>
    </source>
</evidence>
<comment type="function">
    <text evidence="1">Catalyzes the oxidation of 5,10-methylenetetrahydrofolate to 5,10-methenyltetrahydrofolate and then the hydrolysis of 5,10-methenyltetrahydrofolate to 10-formyltetrahydrofolate.</text>
</comment>
<comment type="catalytic activity">
    <reaction evidence="1">
        <text>(6R)-5,10-methylene-5,6,7,8-tetrahydrofolate + NADP(+) = (6R)-5,10-methenyltetrahydrofolate + NADPH</text>
        <dbReference type="Rhea" id="RHEA:22812"/>
        <dbReference type="ChEBI" id="CHEBI:15636"/>
        <dbReference type="ChEBI" id="CHEBI:57455"/>
        <dbReference type="ChEBI" id="CHEBI:57783"/>
        <dbReference type="ChEBI" id="CHEBI:58349"/>
        <dbReference type="EC" id="1.5.1.5"/>
    </reaction>
</comment>
<comment type="catalytic activity">
    <reaction evidence="1">
        <text>(6R)-5,10-methenyltetrahydrofolate + H2O = (6R)-10-formyltetrahydrofolate + H(+)</text>
        <dbReference type="Rhea" id="RHEA:23700"/>
        <dbReference type="ChEBI" id="CHEBI:15377"/>
        <dbReference type="ChEBI" id="CHEBI:15378"/>
        <dbReference type="ChEBI" id="CHEBI:57455"/>
        <dbReference type="ChEBI" id="CHEBI:195366"/>
        <dbReference type="EC" id="3.5.4.9"/>
    </reaction>
</comment>
<comment type="pathway">
    <text evidence="1">One-carbon metabolism; tetrahydrofolate interconversion.</text>
</comment>
<comment type="subunit">
    <text evidence="1">Homodimer.</text>
</comment>
<comment type="similarity">
    <text evidence="1">Belongs to the tetrahydrofolate dehydrogenase/cyclohydrolase family.</text>
</comment>
<name>FOLD_SALPB</name>
<gene>
    <name evidence="1" type="primary">folD</name>
    <name type="ordered locus">SPAB_03022</name>
</gene>
<sequence>MAAKIIDGKTIAQQVRSEVAQKVQARVAAGLRAPGLAVVLVGSNPASQIYVASKRKACDEVGFVSRSYDLPETTSEAELLALIDTLNADNTIDGILVQLPLPAGIDNVKVLERIAPDKDVDGFHPYNVGRLCQRAPRLRPCTPRGIVTLLERYNIDTYGLNAVVIGASNIVGRPMSMELLLAGCTTTVTHRFTKDLRHHVEHADLLIVAVGKPGFIPGEWIKEGAIVIDVGINRLENGKVVGDVVFDEAAARASYITPVPGGVGPMTVATLIENTLQACIEYHDPQGK</sequence>